<gene>
    <name type="primary">HLL</name>
    <name type="ordered locus">At1g17560</name>
    <name type="ORF">F1L3.27</name>
</gene>
<sequence length="196" mass="21160">MATALASKLSKGRSLLGGLCNAFSGLMNSSSNGMMNGSILSQQQHRTFIQMGTILKCVDNSCAKEVMCIQSLRGKKGARLGDIIVGSVKEANPIVQKKVKKDAIPKGKVKKGMVVYGVVVRAAMPKGRADGSQVKFDDNAIVVVGIKEKKGQNNSHGSKRKMEYNQPTGTRVFGPVPHEMRLRKQLKILSLAQHIV</sequence>
<protein>
    <recommendedName>
        <fullName evidence="7">Large ribosomal subunit protein uL14my</fullName>
    </recommendedName>
    <alternativeName>
        <fullName>50S ribosomal protein HLL, mitochondrial</fullName>
    </alternativeName>
    <alternativeName>
        <fullName>Protein HUELLENLOS</fullName>
    </alternativeName>
</protein>
<dbReference type="EMBL" id="AF402992">
    <property type="protein sequence ID" value="AAL60451.1"/>
    <property type="molecule type" value="Genomic_DNA"/>
</dbReference>
<dbReference type="EMBL" id="AC022492">
    <property type="protein sequence ID" value="AAF79479.1"/>
    <property type="status" value="ALT_INIT"/>
    <property type="molecule type" value="Genomic_DNA"/>
</dbReference>
<dbReference type="EMBL" id="CP002684">
    <property type="protein sequence ID" value="AEE29606.1"/>
    <property type="molecule type" value="Genomic_DNA"/>
</dbReference>
<dbReference type="EMBL" id="BT004292">
    <property type="protein sequence ID" value="AAO42290.1"/>
    <property type="molecule type" value="mRNA"/>
</dbReference>
<dbReference type="EMBL" id="BT005522">
    <property type="protein sequence ID" value="AAO63942.1"/>
    <property type="molecule type" value="mRNA"/>
</dbReference>
<dbReference type="EMBL" id="AY086846">
    <property type="protein sequence ID" value="AAM63894.1"/>
    <property type="status" value="ALT_INIT"/>
    <property type="molecule type" value="mRNA"/>
</dbReference>
<dbReference type="RefSeq" id="NP_173200.1">
    <property type="nucleotide sequence ID" value="NM_101619.2"/>
</dbReference>
<dbReference type="SMR" id="Q84JG5"/>
<dbReference type="FunCoup" id="Q84JG5">
    <property type="interactions" value="84"/>
</dbReference>
<dbReference type="STRING" id="3702.Q84JG5"/>
<dbReference type="PaxDb" id="3702-AT1G17560.1"/>
<dbReference type="ProteomicsDB" id="230227"/>
<dbReference type="EnsemblPlants" id="AT1G17560.1">
    <property type="protein sequence ID" value="AT1G17560.1"/>
    <property type="gene ID" value="AT1G17560"/>
</dbReference>
<dbReference type="GeneID" id="838332"/>
<dbReference type="Gramene" id="AT1G17560.1">
    <property type="protein sequence ID" value="AT1G17560.1"/>
    <property type="gene ID" value="AT1G17560"/>
</dbReference>
<dbReference type="KEGG" id="ath:AT1G17560"/>
<dbReference type="Araport" id="AT1G17560"/>
<dbReference type="TAIR" id="AT1G17560">
    <property type="gene designation" value="HLL"/>
</dbReference>
<dbReference type="eggNOG" id="KOG0901">
    <property type="taxonomic scope" value="Eukaryota"/>
</dbReference>
<dbReference type="HOGENOM" id="CLU_095071_1_1_1"/>
<dbReference type="InParanoid" id="Q84JG5"/>
<dbReference type="OrthoDB" id="274765at2759"/>
<dbReference type="PRO" id="PR:Q84JG5"/>
<dbReference type="Proteomes" id="UP000006548">
    <property type="component" value="Chromosome 1"/>
</dbReference>
<dbReference type="ExpressionAtlas" id="Q84JG5">
    <property type="expression patterns" value="baseline and differential"/>
</dbReference>
<dbReference type="GO" id="GO:0005739">
    <property type="term" value="C:mitochondrion"/>
    <property type="evidence" value="ECO:0000314"/>
    <property type="project" value="UniProtKB"/>
</dbReference>
<dbReference type="GO" id="GO:1990904">
    <property type="term" value="C:ribonucleoprotein complex"/>
    <property type="evidence" value="ECO:0007669"/>
    <property type="project" value="UniProtKB-KW"/>
</dbReference>
<dbReference type="GO" id="GO:0005840">
    <property type="term" value="C:ribosome"/>
    <property type="evidence" value="ECO:0007669"/>
    <property type="project" value="UniProtKB-KW"/>
</dbReference>
<dbReference type="GO" id="GO:0019843">
    <property type="term" value="F:rRNA binding"/>
    <property type="evidence" value="ECO:0007669"/>
    <property type="project" value="UniProtKB-KW"/>
</dbReference>
<dbReference type="GO" id="GO:0003735">
    <property type="term" value="F:structural constituent of ribosome"/>
    <property type="evidence" value="ECO:0007669"/>
    <property type="project" value="InterPro"/>
</dbReference>
<dbReference type="GO" id="GO:0009553">
    <property type="term" value="P:embryo sac development"/>
    <property type="evidence" value="ECO:0000315"/>
    <property type="project" value="UniProtKB"/>
</dbReference>
<dbReference type="GO" id="GO:0080060">
    <property type="term" value="P:integument development"/>
    <property type="evidence" value="ECO:0000315"/>
    <property type="project" value="UniProtKB"/>
</dbReference>
<dbReference type="GO" id="GO:0048481">
    <property type="term" value="P:plant ovule development"/>
    <property type="evidence" value="ECO:0000315"/>
    <property type="project" value="UniProtKB"/>
</dbReference>
<dbReference type="GO" id="GO:0009741">
    <property type="term" value="P:response to brassinosteroid"/>
    <property type="evidence" value="ECO:0000314"/>
    <property type="project" value="UniProtKB"/>
</dbReference>
<dbReference type="GO" id="GO:0006412">
    <property type="term" value="P:translation"/>
    <property type="evidence" value="ECO:0007669"/>
    <property type="project" value="InterPro"/>
</dbReference>
<dbReference type="CDD" id="cd00337">
    <property type="entry name" value="Ribosomal_uL14"/>
    <property type="match status" value="1"/>
</dbReference>
<dbReference type="Gene3D" id="2.40.150.20">
    <property type="entry name" value="Ribosomal protein L14"/>
    <property type="match status" value="1"/>
</dbReference>
<dbReference type="HAMAP" id="MF_01367">
    <property type="entry name" value="Ribosomal_uL14"/>
    <property type="match status" value="1"/>
</dbReference>
<dbReference type="InterPro" id="IPR000218">
    <property type="entry name" value="Ribosomal_uL14"/>
</dbReference>
<dbReference type="InterPro" id="IPR019972">
    <property type="entry name" value="Ribosomal_uL14_CS"/>
</dbReference>
<dbReference type="InterPro" id="IPR036853">
    <property type="entry name" value="Ribosomal_uL14_sf"/>
</dbReference>
<dbReference type="PANTHER" id="PTHR11761">
    <property type="entry name" value="50S/60S RIBOSOMAL PROTEIN L14/L23"/>
    <property type="match status" value="1"/>
</dbReference>
<dbReference type="PANTHER" id="PTHR11761:SF21">
    <property type="entry name" value="LARGE RIBOSOMAL SUBUNIT PROTEIN UL14MY"/>
    <property type="match status" value="1"/>
</dbReference>
<dbReference type="Pfam" id="PF00238">
    <property type="entry name" value="Ribosomal_L14"/>
    <property type="match status" value="1"/>
</dbReference>
<dbReference type="SMART" id="SM01374">
    <property type="entry name" value="Ribosomal_L14"/>
    <property type="match status" value="1"/>
</dbReference>
<dbReference type="SUPFAM" id="SSF50193">
    <property type="entry name" value="Ribosomal protein L14"/>
    <property type="match status" value="1"/>
</dbReference>
<dbReference type="PROSITE" id="PS00049">
    <property type="entry name" value="RIBOSOMAL_L14"/>
    <property type="match status" value="1"/>
</dbReference>
<organism>
    <name type="scientific">Arabidopsis thaliana</name>
    <name type="common">Mouse-ear cress</name>
    <dbReference type="NCBI Taxonomy" id="3702"/>
    <lineage>
        <taxon>Eukaryota</taxon>
        <taxon>Viridiplantae</taxon>
        <taxon>Streptophyta</taxon>
        <taxon>Embryophyta</taxon>
        <taxon>Tracheophyta</taxon>
        <taxon>Spermatophyta</taxon>
        <taxon>Magnoliopsida</taxon>
        <taxon>eudicotyledons</taxon>
        <taxon>Gunneridae</taxon>
        <taxon>Pentapetalae</taxon>
        <taxon>rosids</taxon>
        <taxon>malvids</taxon>
        <taxon>Brassicales</taxon>
        <taxon>Brassicaceae</taxon>
        <taxon>Camelineae</taxon>
        <taxon>Arabidopsis</taxon>
    </lineage>
</organism>
<feature type="transit peptide" description="Mitochondrion" evidence="2">
    <location>
        <begin position="1"/>
        <end position="62"/>
    </location>
</feature>
<feature type="chain" id="PRO_0000429331" description="Large ribosomal subunit protein uL14my">
    <location>
        <begin position="63"/>
        <end position="196"/>
    </location>
</feature>
<feature type="region of interest" description="Disordered" evidence="3">
    <location>
        <begin position="148"/>
        <end position="175"/>
    </location>
</feature>
<feature type="sequence conflict" description="In Ref. 5; AAM63894." evidence="8" ref="5">
    <original>M</original>
    <variation>I</variation>
    <location>
        <position position="1"/>
    </location>
</feature>
<feature type="sequence conflict" description="In Ref. 1; AAL60451 and 5; AAM63894." evidence="8" ref="1 5">
    <original>I</original>
    <variation>V</variation>
    <location>
        <position position="104"/>
    </location>
</feature>
<reference key="1">
    <citation type="journal article" date="2001" name="Plant Cell">
        <title>The Arabidopsis HUELLENLOS gene, which is essential for normal ovule development, encodes a mitochondrial ribosomal protein.</title>
        <authorList>
            <person name="Skinner D.J."/>
            <person name="Baker S.C."/>
            <person name="Meister R.J."/>
            <person name="Broadhvest J."/>
            <person name="Schneitz K."/>
            <person name="Gasser C.S."/>
        </authorList>
    </citation>
    <scope>NUCLEOTIDE SEQUENCE [GENOMIC DNA]</scope>
    <scope>FUNCTION</scope>
    <scope>DISRUPTION PHENOTYPE</scope>
    <scope>SUBCELLULAR LOCATION</scope>
    <scope>TISSUE SPECIFICITY</scope>
</reference>
<reference key="2">
    <citation type="journal article" date="2000" name="Nature">
        <title>Sequence and analysis of chromosome 1 of the plant Arabidopsis thaliana.</title>
        <authorList>
            <person name="Theologis A."/>
            <person name="Ecker J.R."/>
            <person name="Palm C.J."/>
            <person name="Federspiel N.A."/>
            <person name="Kaul S."/>
            <person name="White O."/>
            <person name="Alonso J."/>
            <person name="Altafi H."/>
            <person name="Araujo R."/>
            <person name="Bowman C.L."/>
            <person name="Brooks S.Y."/>
            <person name="Buehler E."/>
            <person name="Chan A."/>
            <person name="Chao Q."/>
            <person name="Chen H."/>
            <person name="Cheuk R.F."/>
            <person name="Chin C.W."/>
            <person name="Chung M.K."/>
            <person name="Conn L."/>
            <person name="Conway A.B."/>
            <person name="Conway A.R."/>
            <person name="Creasy T.H."/>
            <person name="Dewar K."/>
            <person name="Dunn P."/>
            <person name="Etgu P."/>
            <person name="Feldblyum T.V."/>
            <person name="Feng J.-D."/>
            <person name="Fong B."/>
            <person name="Fujii C.Y."/>
            <person name="Gill J.E."/>
            <person name="Goldsmith A.D."/>
            <person name="Haas B."/>
            <person name="Hansen N.F."/>
            <person name="Hughes B."/>
            <person name="Huizar L."/>
            <person name="Hunter J.L."/>
            <person name="Jenkins J."/>
            <person name="Johnson-Hopson C."/>
            <person name="Khan S."/>
            <person name="Khaykin E."/>
            <person name="Kim C.J."/>
            <person name="Koo H.L."/>
            <person name="Kremenetskaia I."/>
            <person name="Kurtz D.B."/>
            <person name="Kwan A."/>
            <person name="Lam B."/>
            <person name="Langin-Hooper S."/>
            <person name="Lee A."/>
            <person name="Lee J.M."/>
            <person name="Lenz C.A."/>
            <person name="Li J.H."/>
            <person name="Li Y.-P."/>
            <person name="Lin X."/>
            <person name="Liu S.X."/>
            <person name="Liu Z.A."/>
            <person name="Luros J.S."/>
            <person name="Maiti R."/>
            <person name="Marziali A."/>
            <person name="Militscher J."/>
            <person name="Miranda M."/>
            <person name="Nguyen M."/>
            <person name="Nierman W.C."/>
            <person name="Osborne B.I."/>
            <person name="Pai G."/>
            <person name="Peterson J."/>
            <person name="Pham P.K."/>
            <person name="Rizzo M."/>
            <person name="Rooney T."/>
            <person name="Rowley D."/>
            <person name="Sakano H."/>
            <person name="Salzberg S.L."/>
            <person name="Schwartz J.R."/>
            <person name="Shinn P."/>
            <person name="Southwick A.M."/>
            <person name="Sun H."/>
            <person name="Tallon L.J."/>
            <person name="Tambunga G."/>
            <person name="Toriumi M.J."/>
            <person name="Town C.D."/>
            <person name="Utterback T."/>
            <person name="Van Aken S."/>
            <person name="Vaysberg M."/>
            <person name="Vysotskaia V.S."/>
            <person name="Walker M."/>
            <person name="Wu D."/>
            <person name="Yu G."/>
            <person name="Fraser C.M."/>
            <person name="Venter J.C."/>
            <person name="Davis R.W."/>
        </authorList>
    </citation>
    <scope>NUCLEOTIDE SEQUENCE [LARGE SCALE GENOMIC DNA]</scope>
    <source>
        <strain>cv. Columbia</strain>
    </source>
</reference>
<reference key="3">
    <citation type="journal article" date="2017" name="Plant J.">
        <title>Araport11: a complete reannotation of the Arabidopsis thaliana reference genome.</title>
        <authorList>
            <person name="Cheng C.Y."/>
            <person name="Krishnakumar V."/>
            <person name="Chan A.P."/>
            <person name="Thibaud-Nissen F."/>
            <person name="Schobel S."/>
            <person name="Town C.D."/>
        </authorList>
    </citation>
    <scope>GENOME REANNOTATION</scope>
    <source>
        <strain>cv. Columbia</strain>
    </source>
</reference>
<reference key="4">
    <citation type="journal article" date="2003" name="Science">
        <title>Empirical analysis of transcriptional activity in the Arabidopsis genome.</title>
        <authorList>
            <person name="Yamada K."/>
            <person name="Lim J."/>
            <person name="Dale J.M."/>
            <person name="Chen H."/>
            <person name="Shinn P."/>
            <person name="Palm C.J."/>
            <person name="Southwick A.M."/>
            <person name="Wu H.C."/>
            <person name="Kim C.J."/>
            <person name="Nguyen M."/>
            <person name="Pham P.K."/>
            <person name="Cheuk R.F."/>
            <person name="Karlin-Newmann G."/>
            <person name="Liu S.X."/>
            <person name="Lam B."/>
            <person name="Sakano H."/>
            <person name="Wu T."/>
            <person name="Yu G."/>
            <person name="Miranda M."/>
            <person name="Quach H.L."/>
            <person name="Tripp M."/>
            <person name="Chang C.H."/>
            <person name="Lee J.M."/>
            <person name="Toriumi M.J."/>
            <person name="Chan M.M."/>
            <person name="Tang C.C."/>
            <person name="Onodera C.S."/>
            <person name="Deng J.M."/>
            <person name="Akiyama K."/>
            <person name="Ansari Y."/>
            <person name="Arakawa T."/>
            <person name="Banh J."/>
            <person name="Banno F."/>
            <person name="Bowser L."/>
            <person name="Brooks S.Y."/>
            <person name="Carninci P."/>
            <person name="Chao Q."/>
            <person name="Choy N."/>
            <person name="Enju A."/>
            <person name="Goldsmith A.D."/>
            <person name="Gurjal M."/>
            <person name="Hansen N.F."/>
            <person name="Hayashizaki Y."/>
            <person name="Johnson-Hopson C."/>
            <person name="Hsuan V.W."/>
            <person name="Iida K."/>
            <person name="Karnes M."/>
            <person name="Khan S."/>
            <person name="Koesema E."/>
            <person name="Ishida J."/>
            <person name="Jiang P.X."/>
            <person name="Jones T."/>
            <person name="Kawai J."/>
            <person name="Kamiya A."/>
            <person name="Meyers C."/>
            <person name="Nakajima M."/>
            <person name="Narusaka M."/>
            <person name="Seki M."/>
            <person name="Sakurai T."/>
            <person name="Satou M."/>
            <person name="Tamse R."/>
            <person name="Vaysberg M."/>
            <person name="Wallender E.K."/>
            <person name="Wong C."/>
            <person name="Yamamura Y."/>
            <person name="Yuan S."/>
            <person name="Shinozaki K."/>
            <person name="Davis R.W."/>
            <person name="Theologis A."/>
            <person name="Ecker J.R."/>
        </authorList>
    </citation>
    <scope>NUCLEOTIDE SEQUENCE [LARGE SCALE MRNA]</scope>
    <source>
        <strain>cv. Columbia</strain>
    </source>
</reference>
<reference key="5">
    <citation type="submission" date="2002-03" db="EMBL/GenBank/DDBJ databases">
        <title>Full-length cDNA from Arabidopsis thaliana.</title>
        <authorList>
            <person name="Brover V.V."/>
            <person name="Troukhan M.E."/>
            <person name="Alexandrov N.A."/>
            <person name="Lu Y.-P."/>
            <person name="Flavell R.B."/>
            <person name="Feldmann K.A."/>
        </authorList>
    </citation>
    <scope>NUCLEOTIDE SEQUENCE [LARGE SCALE MRNA]</scope>
</reference>
<reference key="6">
    <citation type="journal article" date="1998" name="Development">
        <title>Pattern formation and growth during floral organogenesis: HUELLENLOS and AINTEGUMENTA are required for the formation of the proximal region of the ovule primordium in Arabidopsis thaliana.</title>
        <authorList>
            <person name="Schneitz K."/>
            <person name="Baker S.C."/>
            <person name="Gasser C.S."/>
            <person name="Redweik A."/>
        </authorList>
    </citation>
    <scope>FUNCTION</scope>
    <scope>DISRUPTION PHENOTYPE</scope>
    <source>
        <strain>cv. Landsberg erecta</strain>
    </source>
</reference>
<reference key="7">
    <citation type="journal article" date="2013" name="Mol. Plant">
        <title>BR signal influences Arabidopsis ovule and seed number through regulating related genes expression by BZR1.</title>
        <authorList>
            <person name="Huang H.-Y."/>
            <person name="Jiang W.-B."/>
            <person name="Hu Y.-W."/>
            <person name="Wu P."/>
            <person name="Zhu J.-Y."/>
            <person name="Liang W.-Q."/>
            <person name="Wang Z.-Y."/>
            <person name="Lin W.-H."/>
        </authorList>
    </citation>
    <scope>FUNCTION</scope>
    <scope>INDUCTION BY BRASSINOSTEROID</scope>
</reference>
<reference key="8">
    <citation type="journal article" date="2023" name="Plant Cell">
        <title>An updated nomenclature for plant ribosomal protein genes.</title>
        <authorList>
            <person name="Scarpin M.R."/>
            <person name="Busche M."/>
            <person name="Martinez R.E."/>
            <person name="Harper L.C."/>
            <person name="Reiser L."/>
            <person name="Szakonyi D."/>
            <person name="Merchante C."/>
            <person name="Lan T."/>
            <person name="Xiong W."/>
            <person name="Mo B."/>
            <person name="Tang G."/>
            <person name="Chen X."/>
            <person name="Bailey-Serres J."/>
            <person name="Browning K.S."/>
            <person name="Brunkard J.O."/>
        </authorList>
    </citation>
    <scope>NOMENCLATURE</scope>
</reference>
<evidence type="ECO:0000250" key="1"/>
<evidence type="ECO:0000255" key="2"/>
<evidence type="ECO:0000256" key="3">
    <source>
        <dbReference type="SAM" id="MobiDB-lite"/>
    </source>
</evidence>
<evidence type="ECO:0000269" key="4">
    <source>
    </source>
</evidence>
<evidence type="ECO:0000269" key="5">
    <source>
    </source>
</evidence>
<evidence type="ECO:0000269" key="6">
    <source>
    </source>
</evidence>
<evidence type="ECO:0000303" key="7">
    <source>
    </source>
</evidence>
<evidence type="ECO:0000305" key="8"/>
<accession>Q84JG5</accession>
<accession>Q8LC24</accession>
<accession>Q8W1X5</accession>
<accession>Q9LNP8</accession>
<name>HLL_ARATH</name>
<comment type="function">
    <text evidence="1 4 5 6">Binds to 23S rRNA in mitochondrion (By similarity). Required for the formation of the proximal region of the ovule primordium during floral organogenesis, thus participating in patterning and growth of ovule. Also regulates the initiation and/or maintenance of integument and embryo sac ontogenesis. Prevents inappropriate cell death in the young ovule.</text>
</comment>
<comment type="subunit">
    <text evidence="1">Part of the mitochondrial 50S ribosomal subunit.</text>
</comment>
<comment type="subcellular location">
    <subcellularLocation>
        <location evidence="4">Mitochondrion</location>
    </subcellularLocation>
</comment>
<comment type="tissue specificity">
    <text evidence="4">Mostly expressed in pistils and inflorescences, including floral organs and meristems, and, to a lower extent, in leaves.</text>
</comment>
<comment type="induction">
    <text evidence="5">By brassinosteroid (BR), repressed by the BR biosynthesis inhibitor brassinazole (BRZ).</text>
</comment>
<comment type="disruption phenotype">
    <text evidence="4 6">Female-sterility due to abnormal gynoecium and ovule growth and development with highly reduced integuments and collapsed cells in the distal regions of the ovule primordia. Slight reduction in the rate of growth and size of the pistil.</text>
</comment>
<comment type="similarity">
    <text evidence="8">Belongs to the universal ribosomal protein uL14 family.</text>
</comment>
<comment type="sequence caution" evidence="8">
    <conflict type="erroneous initiation">
        <sequence resource="EMBL-CDS" id="AAF79479"/>
    </conflict>
    <text>Extended N-terminus.</text>
</comment>
<comment type="sequence caution" evidence="8">
    <conflict type="erroneous initiation">
        <sequence resource="EMBL-CDS" id="AAM63894"/>
    </conflict>
    <text>Truncated N-terminus.</text>
</comment>
<proteinExistence type="evidence at transcript level"/>
<keyword id="KW-0496">Mitochondrion</keyword>
<keyword id="KW-1185">Reference proteome</keyword>
<keyword id="KW-0687">Ribonucleoprotein</keyword>
<keyword id="KW-0689">Ribosomal protein</keyword>
<keyword id="KW-0694">RNA-binding</keyword>
<keyword id="KW-0699">rRNA-binding</keyword>
<keyword id="KW-0809">Transit peptide</keyword>